<reference key="1">
    <citation type="journal article" date="1992" name="Biol. Chem. Hoppe-Seyler">
        <title>The primary structure of the hemoglobin from the tomb bat (Taphozous georgianus, Microchiroptera).</title>
        <authorList>
            <person name="Singer G.A."/>
            <person name="Kleinschmidt T."/>
            <person name="Pettigrew J.D."/>
            <person name="Braunitzer G."/>
        </authorList>
    </citation>
    <scope>PROTEIN SEQUENCE</scope>
</reference>
<accession>P28781</accession>
<evidence type="ECO:0000250" key="1">
    <source>
        <dbReference type="UniProtKB" id="P02086"/>
    </source>
</evidence>
<evidence type="ECO:0000250" key="2">
    <source>
        <dbReference type="UniProtKB" id="P68871"/>
    </source>
</evidence>
<evidence type="ECO:0000255" key="3">
    <source>
        <dbReference type="PROSITE-ProRule" id="PRU00238"/>
    </source>
</evidence>
<proteinExistence type="evidence at protein level"/>
<gene>
    <name type="primary">HBB</name>
</gene>
<protein>
    <recommendedName>
        <fullName>Hemoglobin subunit beta</fullName>
    </recommendedName>
    <alternativeName>
        <fullName>Beta-globin</fullName>
    </alternativeName>
    <alternativeName>
        <fullName>Hemoglobin beta chain</fullName>
    </alternativeName>
</protein>
<keyword id="KW-0007">Acetylation</keyword>
<keyword id="KW-0903">Direct protein sequencing</keyword>
<keyword id="KW-0349">Heme</keyword>
<keyword id="KW-0408">Iron</keyword>
<keyword id="KW-0479">Metal-binding</keyword>
<keyword id="KW-0561">Oxygen transport</keyword>
<keyword id="KW-0597">Phosphoprotein</keyword>
<keyword id="KW-0702">S-nitrosylation</keyword>
<keyword id="KW-0813">Transport</keyword>
<dbReference type="PIR" id="S28935">
    <property type="entry name" value="S28935"/>
</dbReference>
<dbReference type="SMR" id="P28781"/>
<dbReference type="GO" id="GO:0072562">
    <property type="term" value="C:blood microparticle"/>
    <property type="evidence" value="ECO:0007669"/>
    <property type="project" value="TreeGrafter"/>
</dbReference>
<dbReference type="GO" id="GO:0031838">
    <property type="term" value="C:haptoglobin-hemoglobin complex"/>
    <property type="evidence" value="ECO:0007669"/>
    <property type="project" value="TreeGrafter"/>
</dbReference>
<dbReference type="GO" id="GO:0005833">
    <property type="term" value="C:hemoglobin complex"/>
    <property type="evidence" value="ECO:0007669"/>
    <property type="project" value="InterPro"/>
</dbReference>
<dbReference type="GO" id="GO:0031720">
    <property type="term" value="F:haptoglobin binding"/>
    <property type="evidence" value="ECO:0007669"/>
    <property type="project" value="TreeGrafter"/>
</dbReference>
<dbReference type="GO" id="GO:0020037">
    <property type="term" value="F:heme binding"/>
    <property type="evidence" value="ECO:0007669"/>
    <property type="project" value="InterPro"/>
</dbReference>
<dbReference type="GO" id="GO:0031721">
    <property type="term" value="F:hemoglobin alpha binding"/>
    <property type="evidence" value="ECO:0007669"/>
    <property type="project" value="TreeGrafter"/>
</dbReference>
<dbReference type="GO" id="GO:0046872">
    <property type="term" value="F:metal ion binding"/>
    <property type="evidence" value="ECO:0007669"/>
    <property type="project" value="UniProtKB-KW"/>
</dbReference>
<dbReference type="GO" id="GO:0043177">
    <property type="term" value="F:organic acid binding"/>
    <property type="evidence" value="ECO:0007669"/>
    <property type="project" value="TreeGrafter"/>
</dbReference>
<dbReference type="GO" id="GO:0019825">
    <property type="term" value="F:oxygen binding"/>
    <property type="evidence" value="ECO:0007669"/>
    <property type="project" value="InterPro"/>
</dbReference>
<dbReference type="GO" id="GO:0005344">
    <property type="term" value="F:oxygen carrier activity"/>
    <property type="evidence" value="ECO:0007669"/>
    <property type="project" value="UniProtKB-KW"/>
</dbReference>
<dbReference type="GO" id="GO:0004601">
    <property type="term" value="F:peroxidase activity"/>
    <property type="evidence" value="ECO:0007669"/>
    <property type="project" value="TreeGrafter"/>
</dbReference>
<dbReference type="GO" id="GO:0042744">
    <property type="term" value="P:hydrogen peroxide catabolic process"/>
    <property type="evidence" value="ECO:0007669"/>
    <property type="project" value="TreeGrafter"/>
</dbReference>
<dbReference type="CDD" id="cd08925">
    <property type="entry name" value="Hb-beta-like"/>
    <property type="match status" value="1"/>
</dbReference>
<dbReference type="FunFam" id="1.10.490.10:FF:000001">
    <property type="entry name" value="Hemoglobin subunit beta"/>
    <property type="match status" value="1"/>
</dbReference>
<dbReference type="Gene3D" id="1.10.490.10">
    <property type="entry name" value="Globins"/>
    <property type="match status" value="1"/>
</dbReference>
<dbReference type="InterPro" id="IPR000971">
    <property type="entry name" value="Globin"/>
</dbReference>
<dbReference type="InterPro" id="IPR009050">
    <property type="entry name" value="Globin-like_sf"/>
</dbReference>
<dbReference type="InterPro" id="IPR012292">
    <property type="entry name" value="Globin/Proto"/>
</dbReference>
<dbReference type="InterPro" id="IPR002337">
    <property type="entry name" value="Hemoglobin_b"/>
</dbReference>
<dbReference type="InterPro" id="IPR050056">
    <property type="entry name" value="Hemoglobin_oxygen_transport"/>
</dbReference>
<dbReference type="PANTHER" id="PTHR11442">
    <property type="entry name" value="HEMOGLOBIN FAMILY MEMBER"/>
    <property type="match status" value="1"/>
</dbReference>
<dbReference type="PANTHER" id="PTHR11442:SF42">
    <property type="entry name" value="HEMOGLOBIN SUBUNIT BETA"/>
    <property type="match status" value="1"/>
</dbReference>
<dbReference type="Pfam" id="PF00042">
    <property type="entry name" value="Globin"/>
    <property type="match status" value="1"/>
</dbReference>
<dbReference type="PRINTS" id="PR00814">
    <property type="entry name" value="BETAHAEM"/>
</dbReference>
<dbReference type="SUPFAM" id="SSF46458">
    <property type="entry name" value="Globin-like"/>
    <property type="match status" value="1"/>
</dbReference>
<dbReference type="PROSITE" id="PS01033">
    <property type="entry name" value="GLOBIN"/>
    <property type="match status" value="1"/>
</dbReference>
<feature type="chain" id="PRO_0000053123" description="Hemoglobin subunit beta">
    <location>
        <begin position="1"/>
        <end position="146"/>
    </location>
</feature>
<feature type="domain" description="Globin" evidence="3">
    <location>
        <begin position="2"/>
        <end position="146"/>
    </location>
</feature>
<feature type="binding site" description="distal binding residue">
    <location>
        <position position="63"/>
    </location>
    <ligand>
        <name>heme b</name>
        <dbReference type="ChEBI" id="CHEBI:60344"/>
    </ligand>
    <ligandPart>
        <name>Fe</name>
        <dbReference type="ChEBI" id="CHEBI:18248"/>
    </ligandPart>
</feature>
<feature type="binding site" description="proximal binding residue">
    <location>
        <position position="92"/>
    </location>
    <ligand>
        <name>heme b</name>
        <dbReference type="ChEBI" id="CHEBI:60344"/>
    </ligand>
    <ligandPart>
        <name>Fe</name>
        <dbReference type="ChEBI" id="CHEBI:18248"/>
    </ligandPart>
</feature>
<feature type="modified residue" description="N-acetylvaline" evidence="1">
    <location>
        <position position="1"/>
    </location>
</feature>
<feature type="modified residue" description="Phosphothreonine" evidence="2">
    <location>
        <position position="12"/>
    </location>
</feature>
<feature type="modified residue" description="Phosphoserine" evidence="2">
    <location>
        <position position="44"/>
    </location>
</feature>
<feature type="modified residue" description="N6-acetyllysine" evidence="2">
    <location>
        <position position="59"/>
    </location>
</feature>
<feature type="modified residue" description="N6-acetyllysine" evidence="2">
    <location>
        <position position="82"/>
    </location>
</feature>
<feature type="modified residue" description="S-nitrosocysteine" evidence="2">
    <location>
        <position position="93"/>
    </location>
</feature>
<feature type="modified residue" description="N6-acetyllysine" evidence="2">
    <location>
        <position position="144"/>
    </location>
</feature>
<comment type="function">
    <text>Involved in oxygen transport from the lung to the various peripheral tissues.</text>
</comment>
<comment type="subunit">
    <text>Heterotetramer of two alpha chains and two beta chains.</text>
</comment>
<comment type="tissue specificity">
    <text>Red blood cells.</text>
</comment>
<comment type="similarity">
    <text evidence="3">Belongs to the globin family.</text>
</comment>
<name>HBB_TAPGE</name>
<sequence length="146" mass="15902">VHLTADEKAAVTGLWGKVNVDEVGGEALGRLLVVYPWTQRFFDSFGDLSAASAVMGNPKVKAHGKKVLNSFSDGLKNLDNLKGTYAKLSELHCDKLHVDPENFRLLGNVLVCVLARHFGKEFTPQVQAAYQKVVSGVATALAHKYH</sequence>
<organism>
    <name type="scientific">Taphozous georgianus</name>
    <name type="common">Sharp-nosed tomb bat</name>
    <name type="synonym">Taphozous australis georgianus</name>
    <dbReference type="NCBI Taxonomy" id="13281"/>
    <lineage>
        <taxon>Eukaryota</taxon>
        <taxon>Metazoa</taxon>
        <taxon>Chordata</taxon>
        <taxon>Craniata</taxon>
        <taxon>Vertebrata</taxon>
        <taxon>Euteleostomi</taxon>
        <taxon>Mammalia</taxon>
        <taxon>Eutheria</taxon>
        <taxon>Laurasiatheria</taxon>
        <taxon>Chiroptera</taxon>
        <taxon>Yangochiroptera</taxon>
        <taxon>Emballonuridae</taxon>
        <taxon>Taphozoinae</taxon>
        <taxon>Taphozous</taxon>
    </lineage>
</organism>